<accession>B8E0N9</accession>
<feature type="chain" id="PRO_1000191893" description="Argininosuccinate synthase">
    <location>
        <begin position="1"/>
        <end position="397"/>
    </location>
</feature>
<feature type="binding site" evidence="1">
    <location>
        <begin position="9"/>
        <end position="17"/>
    </location>
    <ligand>
        <name>ATP</name>
        <dbReference type="ChEBI" id="CHEBI:30616"/>
    </ligand>
</feature>
<feature type="binding site" evidence="1">
    <location>
        <position position="87"/>
    </location>
    <ligand>
        <name>L-citrulline</name>
        <dbReference type="ChEBI" id="CHEBI:57743"/>
    </ligand>
</feature>
<feature type="binding site" evidence="1">
    <location>
        <position position="117"/>
    </location>
    <ligand>
        <name>ATP</name>
        <dbReference type="ChEBI" id="CHEBI:30616"/>
    </ligand>
</feature>
<feature type="binding site" evidence="1">
    <location>
        <position position="119"/>
    </location>
    <ligand>
        <name>L-aspartate</name>
        <dbReference type="ChEBI" id="CHEBI:29991"/>
    </ligand>
</feature>
<feature type="binding site" evidence="1">
    <location>
        <position position="123"/>
    </location>
    <ligand>
        <name>L-aspartate</name>
        <dbReference type="ChEBI" id="CHEBI:29991"/>
    </ligand>
</feature>
<feature type="binding site" evidence="1">
    <location>
        <position position="123"/>
    </location>
    <ligand>
        <name>L-citrulline</name>
        <dbReference type="ChEBI" id="CHEBI:57743"/>
    </ligand>
</feature>
<feature type="binding site" evidence="1">
    <location>
        <position position="124"/>
    </location>
    <ligand>
        <name>L-aspartate</name>
        <dbReference type="ChEBI" id="CHEBI:29991"/>
    </ligand>
</feature>
<feature type="binding site" evidence="1">
    <location>
        <position position="127"/>
    </location>
    <ligand>
        <name>L-citrulline</name>
        <dbReference type="ChEBI" id="CHEBI:57743"/>
    </ligand>
</feature>
<feature type="binding site" evidence="1">
    <location>
        <position position="175"/>
    </location>
    <ligand>
        <name>L-citrulline</name>
        <dbReference type="ChEBI" id="CHEBI:57743"/>
    </ligand>
</feature>
<feature type="binding site" evidence="1">
    <location>
        <position position="184"/>
    </location>
    <ligand>
        <name>L-citrulline</name>
        <dbReference type="ChEBI" id="CHEBI:57743"/>
    </ligand>
</feature>
<feature type="binding site" evidence="1">
    <location>
        <position position="257"/>
    </location>
    <ligand>
        <name>L-citrulline</name>
        <dbReference type="ChEBI" id="CHEBI:57743"/>
    </ligand>
</feature>
<feature type="binding site" evidence="1">
    <location>
        <position position="269"/>
    </location>
    <ligand>
        <name>L-citrulline</name>
        <dbReference type="ChEBI" id="CHEBI:57743"/>
    </ligand>
</feature>
<keyword id="KW-0028">Amino-acid biosynthesis</keyword>
<keyword id="KW-0055">Arginine biosynthesis</keyword>
<keyword id="KW-0067">ATP-binding</keyword>
<keyword id="KW-0963">Cytoplasm</keyword>
<keyword id="KW-0436">Ligase</keyword>
<keyword id="KW-0547">Nucleotide-binding</keyword>
<keyword id="KW-1185">Reference proteome</keyword>
<comment type="catalytic activity">
    <reaction evidence="1">
        <text>L-citrulline + L-aspartate + ATP = 2-(N(omega)-L-arginino)succinate + AMP + diphosphate + H(+)</text>
        <dbReference type="Rhea" id="RHEA:10932"/>
        <dbReference type="ChEBI" id="CHEBI:15378"/>
        <dbReference type="ChEBI" id="CHEBI:29991"/>
        <dbReference type="ChEBI" id="CHEBI:30616"/>
        <dbReference type="ChEBI" id="CHEBI:33019"/>
        <dbReference type="ChEBI" id="CHEBI:57472"/>
        <dbReference type="ChEBI" id="CHEBI:57743"/>
        <dbReference type="ChEBI" id="CHEBI:456215"/>
        <dbReference type="EC" id="6.3.4.5"/>
    </reaction>
</comment>
<comment type="pathway">
    <text evidence="1">Amino-acid biosynthesis; L-arginine biosynthesis; L-arginine from L-ornithine and carbamoyl phosphate: step 2/3.</text>
</comment>
<comment type="subunit">
    <text evidence="1">Homotetramer.</text>
</comment>
<comment type="subcellular location">
    <subcellularLocation>
        <location evidence="1">Cytoplasm</location>
    </subcellularLocation>
</comment>
<comment type="similarity">
    <text evidence="1">Belongs to the argininosuccinate synthase family. Type 1 subfamily.</text>
</comment>
<gene>
    <name evidence="1" type="primary">argG</name>
    <name type="ordered locus">Dtur_1787</name>
</gene>
<sequence length="397" mass="44986">MEREKVVLAYSGGLDTSVAIKWLMQKYSLDVITLTVDIGQGIDLNEIKNKAENLGVEKAYVLDLREEFIKDYIIPAIKSNAMYERVYPLATALSRPLIAKYLVKVAKENGAKYVAHGCTGKGNDQVRIDLGVKALAPDLEIIAPVREWNFSREEEIEYAIENNIPIPVSRKNPYSIDENLWGRSIEGGILEDPWQEPPEDIYLWTKLENKEPSYIEITFEKGIPVKLNGVEKDLVGLIEELNKIAGSYGIGRIDHIENRLVGIKSREIYEAPAALVIIKAHEALEDLVLPRELAHFKRMLEDKYAELVYYGLWFDPFREALQAFMDKTQERVTGKVKIKLIPWSFSIVGRDSPYSLYDHSLATYDKGSTFSTESAVGFIKLFGLQNYLYALKGGKNA</sequence>
<protein>
    <recommendedName>
        <fullName evidence="1">Argininosuccinate synthase</fullName>
        <ecNumber evidence="1">6.3.4.5</ecNumber>
    </recommendedName>
    <alternativeName>
        <fullName evidence="1">Citrulline--aspartate ligase</fullName>
    </alternativeName>
</protein>
<name>ASSY_DICTD</name>
<organism>
    <name type="scientific">Dictyoglomus turgidum (strain DSM 6724 / Z-1310)</name>
    <dbReference type="NCBI Taxonomy" id="515635"/>
    <lineage>
        <taxon>Bacteria</taxon>
        <taxon>Pseudomonadati</taxon>
        <taxon>Dictyoglomota</taxon>
        <taxon>Dictyoglomia</taxon>
        <taxon>Dictyoglomales</taxon>
        <taxon>Dictyoglomaceae</taxon>
        <taxon>Dictyoglomus</taxon>
    </lineage>
</organism>
<proteinExistence type="inferred from homology"/>
<reference key="1">
    <citation type="journal article" date="2016" name="Front. Microbiol.">
        <title>The complete genome sequence of hyperthermophile Dictyoglomus turgidum DSM 6724 reveals a specialized carbohydrate fermentor.</title>
        <authorList>
            <person name="Brumm P.J."/>
            <person name="Gowda K."/>
            <person name="Robb F.T."/>
            <person name="Mead D.A."/>
        </authorList>
    </citation>
    <scope>NUCLEOTIDE SEQUENCE [LARGE SCALE GENOMIC DNA]</scope>
    <source>
        <strain>DSM 6724 / Z-1310</strain>
    </source>
</reference>
<evidence type="ECO:0000255" key="1">
    <source>
        <dbReference type="HAMAP-Rule" id="MF_00005"/>
    </source>
</evidence>
<dbReference type="EC" id="6.3.4.5" evidence="1"/>
<dbReference type="EMBL" id="CP001251">
    <property type="protein sequence ID" value="ACK43059.1"/>
    <property type="molecule type" value="Genomic_DNA"/>
</dbReference>
<dbReference type="RefSeq" id="WP_012584133.1">
    <property type="nucleotide sequence ID" value="NC_011661.1"/>
</dbReference>
<dbReference type="RefSeq" id="YP_002353673.1">
    <property type="nucleotide sequence ID" value="NC_011661.1"/>
</dbReference>
<dbReference type="SMR" id="B8E0N9"/>
<dbReference type="FunCoup" id="B8E0N9">
    <property type="interactions" value="306"/>
</dbReference>
<dbReference type="STRING" id="515635.Dtur_1787"/>
<dbReference type="EnsemblBacteria" id="ACK43059">
    <property type="protein sequence ID" value="ACK43059"/>
    <property type="gene ID" value="Dtur_1787"/>
</dbReference>
<dbReference type="KEGG" id="dtu:Dtur_1787"/>
<dbReference type="PATRIC" id="fig|515635.4.peg.1839"/>
<dbReference type="eggNOG" id="COG0137">
    <property type="taxonomic scope" value="Bacteria"/>
</dbReference>
<dbReference type="HOGENOM" id="CLU_032784_4_2_0"/>
<dbReference type="InParanoid" id="B8E0N9"/>
<dbReference type="OrthoDB" id="9801641at2"/>
<dbReference type="UniPathway" id="UPA00068">
    <property type="reaction ID" value="UER00113"/>
</dbReference>
<dbReference type="Proteomes" id="UP000007719">
    <property type="component" value="Chromosome"/>
</dbReference>
<dbReference type="GO" id="GO:0005737">
    <property type="term" value="C:cytoplasm"/>
    <property type="evidence" value="ECO:0000318"/>
    <property type="project" value="GO_Central"/>
</dbReference>
<dbReference type="GO" id="GO:0004055">
    <property type="term" value="F:argininosuccinate synthase activity"/>
    <property type="evidence" value="ECO:0000318"/>
    <property type="project" value="GO_Central"/>
</dbReference>
<dbReference type="GO" id="GO:0005524">
    <property type="term" value="F:ATP binding"/>
    <property type="evidence" value="ECO:0007669"/>
    <property type="project" value="UniProtKB-UniRule"/>
</dbReference>
<dbReference type="GO" id="GO:0000053">
    <property type="term" value="P:argininosuccinate metabolic process"/>
    <property type="evidence" value="ECO:0000318"/>
    <property type="project" value="GO_Central"/>
</dbReference>
<dbReference type="GO" id="GO:0006526">
    <property type="term" value="P:L-arginine biosynthetic process"/>
    <property type="evidence" value="ECO:0000318"/>
    <property type="project" value="GO_Central"/>
</dbReference>
<dbReference type="GO" id="GO:0000050">
    <property type="term" value="P:urea cycle"/>
    <property type="evidence" value="ECO:0000318"/>
    <property type="project" value="GO_Central"/>
</dbReference>
<dbReference type="CDD" id="cd01999">
    <property type="entry name" value="ASS"/>
    <property type="match status" value="1"/>
</dbReference>
<dbReference type="FunFam" id="3.40.50.620:FF:000038">
    <property type="entry name" value="Argininosuccinate synthase"/>
    <property type="match status" value="1"/>
</dbReference>
<dbReference type="FunFam" id="3.90.1260.10:FF:000007">
    <property type="entry name" value="Argininosuccinate synthase"/>
    <property type="match status" value="1"/>
</dbReference>
<dbReference type="Gene3D" id="3.90.1260.10">
    <property type="entry name" value="Argininosuccinate synthetase, chain A, domain 2"/>
    <property type="match status" value="1"/>
</dbReference>
<dbReference type="Gene3D" id="3.40.50.620">
    <property type="entry name" value="HUPs"/>
    <property type="match status" value="1"/>
</dbReference>
<dbReference type="HAMAP" id="MF_00005">
    <property type="entry name" value="Arg_succ_synth_type1"/>
    <property type="match status" value="1"/>
</dbReference>
<dbReference type="InterPro" id="IPR048268">
    <property type="entry name" value="Arginosuc_syn_C"/>
</dbReference>
<dbReference type="InterPro" id="IPR048267">
    <property type="entry name" value="Arginosuc_syn_N"/>
</dbReference>
<dbReference type="InterPro" id="IPR001518">
    <property type="entry name" value="Arginosuc_synth"/>
</dbReference>
<dbReference type="InterPro" id="IPR018223">
    <property type="entry name" value="Arginosuc_synth_CS"/>
</dbReference>
<dbReference type="InterPro" id="IPR023434">
    <property type="entry name" value="Arginosuc_synth_type_1_subfam"/>
</dbReference>
<dbReference type="InterPro" id="IPR024074">
    <property type="entry name" value="AS_cat/multimer_dom_body"/>
</dbReference>
<dbReference type="InterPro" id="IPR014729">
    <property type="entry name" value="Rossmann-like_a/b/a_fold"/>
</dbReference>
<dbReference type="NCBIfam" id="TIGR00032">
    <property type="entry name" value="argG"/>
    <property type="match status" value="1"/>
</dbReference>
<dbReference type="NCBIfam" id="NF001770">
    <property type="entry name" value="PRK00509.1"/>
    <property type="match status" value="1"/>
</dbReference>
<dbReference type="PANTHER" id="PTHR11587">
    <property type="entry name" value="ARGININOSUCCINATE SYNTHASE"/>
    <property type="match status" value="1"/>
</dbReference>
<dbReference type="PANTHER" id="PTHR11587:SF2">
    <property type="entry name" value="ARGININOSUCCINATE SYNTHASE"/>
    <property type="match status" value="1"/>
</dbReference>
<dbReference type="Pfam" id="PF20979">
    <property type="entry name" value="Arginosuc_syn_C"/>
    <property type="match status" value="1"/>
</dbReference>
<dbReference type="Pfam" id="PF00764">
    <property type="entry name" value="Arginosuc_synth"/>
    <property type="match status" value="1"/>
</dbReference>
<dbReference type="SUPFAM" id="SSF52402">
    <property type="entry name" value="Adenine nucleotide alpha hydrolases-like"/>
    <property type="match status" value="1"/>
</dbReference>
<dbReference type="SUPFAM" id="SSF69864">
    <property type="entry name" value="Argininosuccinate synthetase, C-terminal domain"/>
    <property type="match status" value="1"/>
</dbReference>
<dbReference type="PROSITE" id="PS00564">
    <property type="entry name" value="ARGININOSUCCIN_SYN_1"/>
    <property type="match status" value="1"/>
</dbReference>